<accession>Q56A08</accession>
<accession>A0JLW7</accession>
<accession>A2AEU7</accession>
<accession>Q6P5V0</accession>
<accession>Q8C1C3</accession>
<gene>
    <name type="primary">Gpkow</name>
</gene>
<evidence type="ECO:0000250" key="1">
    <source>
        <dbReference type="UniProtKB" id="Q92917"/>
    </source>
</evidence>
<evidence type="ECO:0000255" key="2">
    <source>
        <dbReference type="PROSITE-ProRule" id="PRU00092"/>
    </source>
</evidence>
<evidence type="ECO:0000256" key="3">
    <source>
        <dbReference type="SAM" id="MobiDB-lite"/>
    </source>
</evidence>
<evidence type="ECO:0000305" key="4"/>
<evidence type="ECO:0007744" key="5">
    <source>
    </source>
</evidence>
<organism>
    <name type="scientific">Mus musculus</name>
    <name type="common">Mouse</name>
    <dbReference type="NCBI Taxonomy" id="10090"/>
    <lineage>
        <taxon>Eukaryota</taxon>
        <taxon>Metazoa</taxon>
        <taxon>Chordata</taxon>
        <taxon>Craniata</taxon>
        <taxon>Vertebrata</taxon>
        <taxon>Euteleostomi</taxon>
        <taxon>Mammalia</taxon>
        <taxon>Eutheria</taxon>
        <taxon>Euarchontoglires</taxon>
        <taxon>Glires</taxon>
        <taxon>Rodentia</taxon>
        <taxon>Myomorpha</taxon>
        <taxon>Muroidea</taxon>
        <taxon>Muridae</taxon>
        <taxon>Murinae</taxon>
        <taxon>Mus</taxon>
        <taxon>Mus</taxon>
    </lineage>
</organism>
<comment type="function">
    <text evidence="1">RNA-binding protein involved in pre-mRNA splicing. As a component of the minor spliceosome, involved in the splicing of U12-type introns in pre-mRNAs (By similarity).</text>
</comment>
<comment type="subunit">
    <text evidence="1">Component of the minor spliceosome, which splices U12-type introns (By similarity). Interacts with PRKX, PRKACB and DHX16.</text>
</comment>
<comment type="subcellular location">
    <subcellularLocation>
        <location evidence="1">Nucleus</location>
    </subcellularLocation>
</comment>
<comment type="PTM">
    <text evidence="1">Phosphorylation regulates its ability to bind RNA.</text>
</comment>
<comment type="similarity">
    <text evidence="4">Belongs to the MOS2 family.</text>
</comment>
<comment type="sequence caution" evidence="4">
    <conflict type="erroneous initiation">
        <sequence resource="EMBL-CDS" id="AAH92224"/>
    </conflict>
</comment>
<comment type="sequence caution" evidence="4">
    <conflict type="erroneous initiation">
        <sequence resource="EMBL-CDS" id="AAI20680"/>
    </conflict>
</comment>
<comment type="sequence caution" evidence="4">
    <conflict type="erroneous initiation">
        <sequence resource="EMBL-CDS" id="AAI25336"/>
    </conflict>
</comment>
<comment type="sequence caution" evidence="4">
    <conflict type="erroneous initiation">
        <sequence resource="EMBL-CDS" id="BAC25949"/>
    </conflict>
</comment>
<feature type="initiator methionine" description="Removed" evidence="1">
    <location>
        <position position="1"/>
    </location>
</feature>
<feature type="chain" id="PRO_0000280563" description="G-patch domain and KOW motifs-containing protein">
    <location>
        <begin position="2"/>
        <end position="488"/>
    </location>
</feature>
<feature type="domain" description="G-patch" evidence="2">
    <location>
        <begin position="164"/>
        <end position="210"/>
    </location>
</feature>
<feature type="domain" description="KOW 1">
    <location>
        <begin position="231"/>
        <end position="258"/>
    </location>
</feature>
<feature type="domain" description="KOW 2">
    <location>
        <begin position="401"/>
        <end position="428"/>
    </location>
</feature>
<feature type="region of interest" description="Disordered" evidence="3">
    <location>
        <begin position="1"/>
        <end position="20"/>
    </location>
</feature>
<feature type="region of interest" description="Disordered" evidence="3">
    <location>
        <begin position="72"/>
        <end position="97"/>
    </location>
</feature>
<feature type="region of interest" description="Disordered" evidence="3">
    <location>
        <begin position="216"/>
        <end position="241"/>
    </location>
</feature>
<feature type="region of interest" description="Disordered" evidence="3">
    <location>
        <begin position="295"/>
        <end position="367"/>
    </location>
</feature>
<feature type="compositionally biased region" description="Pro residues" evidence="3">
    <location>
        <begin position="1"/>
        <end position="11"/>
    </location>
</feature>
<feature type="compositionally biased region" description="Polar residues" evidence="3">
    <location>
        <begin position="73"/>
        <end position="95"/>
    </location>
</feature>
<feature type="compositionally biased region" description="Basic and acidic residues" evidence="3">
    <location>
        <begin position="224"/>
        <end position="236"/>
    </location>
</feature>
<feature type="compositionally biased region" description="Polar residues" evidence="3">
    <location>
        <begin position="307"/>
        <end position="331"/>
    </location>
</feature>
<feature type="compositionally biased region" description="Basic and acidic residues" evidence="3">
    <location>
        <begin position="332"/>
        <end position="341"/>
    </location>
</feature>
<feature type="compositionally biased region" description="Basic and acidic residues" evidence="3">
    <location>
        <begin position="349"/>
        <end position="363"/>
    </location>
</feature>
<feature type="modified residue" description="N-acetylalanine" evidence="1">
    <location>
        <position position="2"/>
    </location>
</feature>
<feature type="modified residue" description="Phosphoserine; by PKA" evidence="1">
    <location>
        <position position="25"/>
    </location>
</feature>
<feature type="modified residue" description="Phosphoserine" evidence="1">
    <location>
        <position position="115"/>
    </location>
</feature>
<feature type="modified residue" description="Phosphoserine" evidence="5">
    <location>
        <position position="485"/>
    </location>
</feature>
<keyword id="KW-0007">Acetylation</keyword>
<keyword id="KW-0507">mRNA processing</keyword>
<keyword id="KW-0508">mRNA splicing</keyword>
<keyword id="KW-0539">Nucleus</keyword>
<keyword id="KW-0597">Phosphoprotein</keyword>
<keyword id="KW-1185">Reference proteome</keyword>
<keyword id="KW-0677">Repeat</keyword>
<keyword id="KW-0694">RNA-binding</keyword>
<proteinExistence type="evidence at protein level"/>
<dbReference type="EMBL" id="AK028433">
    <property type="protein sequence ID" value="BAC25949.1"/>
    <property type="status" value="ALT_INIT"/>
    <property type="molecule type" value="mRNA"/>
</dbReference>
<dbReference type="EMBL" id="AL671995">
    <property type="status" value="NOT_ANNOTATED_CDS"/>
    <property type="molecule type" value="Genomic_DNA"/>
</dbReference>
<dbReference type="EMBL" id="BC062646">
    <property type="protein sequence ID" value="AAH62646.1"/>
    <property type="molecule type" value="mRNA"/>
</dbReference>
<dbReference type="EMBL" id="BC092224">
    <property type="protein sequence ID" value="AAH92224.2"/>
    <property type="status" value="ALT_INIT"/>
    <property type="molecule type" value="mRNA"/>
</dbReference>
<dbReference type="EMBL" id="BC120679">
    <property type="protein sequence ID" value="AAI20680.1"/>
    <property type="status" value="ALT_INIT"/>
    <property type="molecule type" value="mRNA"/>
</dbReference>
<dbReference type="EMBL" id="BC125335">
    <property type="protein sequence ID" value="AAI25336.1"/>
    <property type="status" value="ALT_INIT"/>
    <property type="molecule type" value="mRNA"/>
</dbReference>
<dbReference type="CCDS" id="CCDS29969.2"/>
<dbReference type="RefSeq" id="NP_776108.2">
    <property type="nucleotide sequence ID" value="NM_173747.3"/>
</dbReference>
<dbReference type="SMR" id="Q56A08"/>
<dbReference type="BioGRID" id="229077">
    <property type="interactions" value="14"/>
</dbReference>
<dbReference type="FunCoup" id="Q56A08">
    <property type="interactions" value="4394"/>
</dbReference>
<dbReference type="IntAct" id="Q56A08">
    <property type="interactions" value="13"/>
</dbReference>
<dbReference type="STRING" id="10090.ENSMUSP00000076178"/>
<dbReference type="iPTMnet" id="Q56A08"/>
<dbReference type="PhosphoSitePlus" id="Q56A08"/>
<dbReference type="SwissPalm" id="Q56A08"/>
<dbReference type="jPOST" id="Q56A08"/>
<dbReference type="PaxDb" id="10090-ENSMUSP00000076178"/>
<dbReference type="PeptideAtlas" id="Q56A08"/>
<dbReference type="ProteomicsDB" id="271267"/>
<dbReference type="Pumba" id="Q56A08"/>
<dbReference type="Antibodypedia" id="340">
    <property type="antibodies" value="180 antibodies from 28 providers"/>
</dbReference>
<dbReference type="DNASU" id="209416"/>
<dbReference type="Ensembl" id="ENSMUST00000049896.13">
    <property type="protein sequence ID" value="ENSMUSP00000076178.6"/>
    <property type="gene ID" value="ENSMUSG00000031148.15"/>
</dbReference>
<dbReference type="GeneID" id="209416"/>
<dbReference type="KEGG" id="mmu:209416"/>
<dbReference type="UCSC" id="uc009sma.1">
    <property type="organism name" value="mouse"/>
</dbReference>
<dbReference type="AGR" id="MGI:1859610"/>
<dbReference type="CTD" id="27238"/>
<dbReference type="MGI" id="MGI:1859610">
    <property type="gene designation" value="Gpkow"/>
</dbReference>
<dbReference type="VEuPathDB" id="HostDB:ENSMUSG00000031148"/>
<dbReference type="eggNOG" id="KOG4315">
    <property type="taxonomic scope" value="Eukaryota"/>
</dbReference>
<dbReference type="GeneTree" id="ENSGT00390000015154"/>
<dbReference type="HOGENOM" id="CLU_045183_1_0_1"/>
<dbReference type="InParanoid" id="Q56A08"/>
<dbReference type="OMA" id="AHKDKEK"/>
<dbReference type="OrthoDB" id="5577072at2759"/>
<dbReference type="PhylomeDB" id="Q56A08"/>
<dbReference type="TreeFam" id="TF316786"/>
<dbReference type="Reactome" id="R-MMU-72163">
    <property type="pathway name" value="mRNA Splicing - Major Pathway"/>
</dbReference>
<dbReference type="BioGRID-ORCS" id="209416">
    <property type="hits" value="25 hits in 80 CRISPR screens"/>
</dbReference>
<dbReference type="ChiTaRS" id="Gpkow">
    <property type="organism name" value="mouse"/>
</dbReference>
<dbReference type="PRO" id="PR:Q56A08"/>
<dbReference type="Proteomes" id="UP000000589">
    <property type="component" value="Chromosome X"/>
</dbReference>
<dbReference type="RNAct" id="Q56A08">
    <property type="molecule type" value="protein"/>
</dbReference>
<dbReference type="Bgee" id="ENSMUSG00000031148">
    <property type="expression patterns" value="Expressed in manus and 223 other cell types or tissues"/>
</dbReference>
<dbReference type="ExpressionAtlas" id="Q56A08">
    <property type="expression patterns" value="baseline and differential"/>
</dbReference>
<dbReference type="GO" id="GO:0005654">
    <property type="term" value="C:nucleoplasm"/>
    <property type="evidence" value="ECO:0007669"/>
    <property type="project" value="Ensembl"/>
</dbReference>
<dbReference type="GO" id="GO:0005634">
    <property type="term" value="C:nucleus"/>
    <property type="evidence" value="ECO:0000250"/>
    <property type="project" value="UniProtKB"/>
</dbReference>
<dbReference type="GO" id="GO:0005681">
    <property type="term" value="C:spliceosomal complex"/>
    <property type="evidence" value="ECO:0000250"/>
    <property type="project" value="UniProtKB"/>
</dbReference>
<dbReference type="GO" id="GO:0003723">
    <property type="term" value="F:RNA binding"/>
    <property type="evidence" value="ECO:0000250"/>
    <property type="project" value="UniProtKB"/>
</dbReference>
<dbReference type="GO" id="GO:0000398">
    <property type="term" value="P:mRNA splicing, via spliceosome"/>
    <property type="evidence" value="ECO:0000250"/>
    <property type="project" value="UniProtKB"/>
</dbReference>
<dbReference type="CDD" id="cd13152">
    <property type="entry name" value="KOW_GPKOW_A"/>
    <property type="match status" value="1"/>
</dbReference>
<dbReference type="CDD" id="cd13153">
    <property type="entry name" value="KOW_GPKOW_B"/>
    <property type="match status" value="1"/>
</dbReference>
<dbReference type="Gene3D" id="2.30.30.30">
    <property type="match status" value="2"/>
</dbReference>
<dbReference type="InterPro" id="IPR000467">
    <property type="entry name" value="G_patch_dom"/>
</dbReference>
<dbReference type="InterPro" id="IPR041993">
    <property type="entry name" value="GPKOW_KOW1"/>
</dbReference>
<dbReference type="InterPro" id="IPR041994">
    <property type="entry name" value="GPKOW_KOW2"/>
</dbReference>
<dbReference type="InterPro" id="IPR005824">
    <property type="entry name" value="KOW"/>
</dbReference>
<dbReference type="InterPro" id="IPR014722">
    <property type="entry name" value="Rib_uL2_dom2"/>
</dbReference>
<dbReference type="InterPro" id="IPR045166">
    <property type="entry name" value="Spp2-like"/>
</dbReference>
<dbReference type="InterPro" id="IPR026822">
    <property type="entry name" value="Spp2/MOS2_G-patch"/>
</dbReference>
<dbReference type="InterPro" id="IPR008991">
    <property type="entry name" value="Translation_prot_SH3-like_sf"/>
</dbReference>
<dbReference type="PANTHER" id="PTHR15818">
    <property type="entry name" value="G PATCH AND KOW-CONTAINING"/>
    <property type="match status" value="1"/>
</dbReference>
<dbReference type="PANTHER" id="PTHR15818:SF2">
    <property type="entry name" value="G-PATCH DOMAIN AND KOW MOTIFS-CONTAINING PROTEIN"/>
    <property type="match status" value="1"/>
</dbReference>
<dbReference type="Pfam" id="PF12656">
    <property type="entry name" value="G-patch_2"/>
    <property type="match status" value="1"/>
</dbReference>
<dbReference type="Pfam" id="PF25088">
    <property type="entry name" value="GPKOW_C"/>
    <property type="match status" value="1"/>
</dbReference>
<dbReference type="Pfam" id="PF00467">
    <property type="entry name" value="KOW"/>
    <property type="match status" value="1"/>
</dbReference>
<dbReference type="SMART" id="SM00443">
    <property type="entry name" value="G_patch"/>
    <property type="match status" value="1"/>
</dbReference>
<dbReference type="SMART" id="SM00739">
    <property type="entry name" value="KOW"/>
    <property type="match status" value="2"/>
</dbReference>
<dbReference type="SUPFAM" id="SSF50104">
    <property type="entry name" value="Translation proteins SH3-like domain"/>
    <property type="match status" value="1"/>
</dbReference>
<dbReference type="PROSITE" id="PS50174">
    <property type="entry name" value="G_PATCH"/>
    <property type="match status" value="1"/>
</dbReference>
<reference key="1">
    <citation type="journal article" date="2005" name="Science">
        <title>The transcriptional landscape of the mammalian genome.</title>
        <authorList>
            <person name="Carninci P."/>
            <person name="Kasukawa T."/>
            <person name="Katayama S."/>
            <person name="Gough J."/>
            <person name="Frith M.C."/>
            <person name="Maeda N."/>
            <person name="Oyama R."/>
            <person name="Ravasi T."/>
            <person name="Lenhard B."/>
            <person name="Wells C."/>
            <person name="Kodzius R."/>
            <person name="Shimokawa K."/>
            <person name="Bajic V.B."/>
            <person name="Brenner S.E."/>
            <person name="Batalov S."/>
            <person name="Forrest A.R."/>
            <person name="Zavolan M."/>
            <person name="Davis M.J."/>
            <person name="Wilming L.G."/>
            <person name="Aidinis V."/>
            <person name="Allen J.E."/>
            <person name="Ambesi-Impiombato A."/>
            <person name="Apweiler R."/>
            <person name="Aturaliya R.N."/>
            <person name="Bailey T.L."/>
            <person name="Bansal M."/>
            <person name="Baxter L."/>
            <person name="Beisel K.W."/>
            <person name="Bersano T."/>
            <person name="Bono H."/>
            <person name="Chalk A.M."/>
            <person name="Chiu K.P."/>
            <person name="Choudhary V."/>
            <person name="Christoffels A."/>
            <person name="Clutterbuck D.R."/>
            <person name="Crowe M.L."/>
            <person name="Dalla E."/>
            <person name="Dalrymple B.P."/>
            <person name="de Bono B."/>
            <person name="Della Gatta G."/>
            <person name="di Bernardo D."/>
            <person name="Down T."/>
            <person name="Engstrom P."/>
            <person name="Fagiolini M."/>
            <person name="Faulkner G."/>
            <person name="Fletcher C.F."/>
            <person name="Fukushima T."/>
            <person name="Furuno M."/>
            <person name="Futaki S."/>
            <person name="Gariboldi M."/>
            <person name="Georgii-Hemming P."/>
            <person name="Gingeras T.R."/>
            <person name="Gojobori T."/>
            <person name="Green R.E."/>
            <person name="Gustincich S."/>
            <person name="Harbers M."/>
            <person name="Hayashi Y."/>
            <person name="Hensch T.K."/>
            <person name="Hirokawa N."/>
            <person name="Hill D."/>
            <person name="Huminiecki L."/>
            <person name="Iacono M."/>
            <person name="Ikeo K."/>
            <person name="Iwama A."/>
            <person name="Ishikawa T."/>
            <person name="Jakt M."/>
            <person name="Kanapin A."/>
            <person name="Katoh M."/>
            <person name="Kawasawa Y."/>
            <person name="Kelso J."/>
            <person name="Kitamura H."/>
            <person name="Kitano H."/>
            <person name="Kollias G."/>
            <person name="Krishnan S.P."/>
            <person name="Kruger A."/>
            <person name="Kummerfeld S.K."/>
            <person name="Kurochkin I.V."/>
            <person name="Lareau L.F."/>
            <person name="Lazarevic D."/>
            <person name="Lipovich L."/>
            <person name="Liu J."/>
            <person name="Liuni S."/>
            <person name="McWilliam S."/>
            <person name="Madan Babu M."/>
            <person name="Madera M."/>
            <person name="Marchionni L."/>
            <person name="Matsuda H."/>
            <person name="Matsuzawa S."/>
            <person name="Miki H."/>
            <person name="Mignone F."/>
            <person name="Miyake S."/>
            <person name="Morris K."/>
            <person name="Mottagui-Tabar S."/>
            <person name="Mulder N."/>
            <person name="Nakano N."/>
            <person name="Nakauchi H."/>
            <person name="Ng P."/>
            <person name="Nilsson R."/>
            <person name="Nishiguchi S."/>
            <person name="Nishikawa S."/>
            <person name="Nori F."/>
            <person name="Ohara O."/>
            <person name="Okazaki Y."/>
            <person name="Orlando V."/>
            <person name="Pang K.C."/>
            <person name="Pavan W.J."/>
            <person name="Pavesi G."/>
            <person name="Pesole G."/>
            <person name="Petrovsky N."/>
            <person name="Piazza S."/>
            <person name="Reed J."/>
            <person name="Reid J.F."/>
            <person name="Ring B.Z."/>
            <person name="Ringwald M."/>
            <person name="Rost B."/>
            <person name="Ruan Y."/>
            <person name="Salzberg S.L."/>
            <person name="Sandelin A."/>
            <person name="Schneider C."/>
            <person name="Schoenbach C."/>
            <person name="Sekiguchi K."/>
            <person name="Semple C.A."/>
            <person name="Seno S."/>
            <person name="Sessa L."/>
            <person name="Sheng Y."/>
            <person name="Shibata Y."/>
            <person name="Shimada H."/>
            <person name="Shimada K."/>
            <person name="Silva D."/>
            <person name="Sinclair B."/>
            <person name="Sperling S."/>
            <person name="Stupka E."/>
            <person name="Sugiura K."/>
            <person name="Sultana R."/>
            <person name="Takenaka Y."/>
            <person name="Taki K."/>
            <person name="Tammoja K."/>
            <person name="Tan S.L."/>
            <person name="Tang S."/>
            <person name="Taylor M.S."/>
            <person name="Tegner J."/>
            <person name="Teichmann S.A."/>
            <person name="Ueda H.R."/>
            <person name="van Nimwegen E."/>
            <person name="Verardo R."/>
            <person name="Wei C.L."/>
            <person name="Yagi K."/>
            <person name="Yamanishi H."/>
            <person name="Zabarovsky E."/>
            <person name="Zhu S."/>
            <person name="Zimmer A."/>
            <person name="Hide W."/>
            <person name="Bult C."/>
            <person name="Grimmond S.M."/>
            <person name="Teasdale R.D."/>
            <person name="Liu E.T."/>
            <person name="Brusic V."/>
            <person name="Quackenbush J."/>
            <person name="Wahlestedt C."/>
            <person name="Mattick J.S."/>
            <person name="Hume D.A."/>
            <person name="Kai C."/>
            <person name="Sasaki D."/>
            <person name="Tomaru Y."/>
            <person name="Fukuda S."/>
            <person name="Kanamori-Katayama M."/>
            <person name="Suzuki M."/>
            <person name="Aoki J."/>
            <person name="Arakawa T."/>
            <person name="Iida J."/>
            <person name="Imamura K."/>
            <person name="Itoh M."/>
            <person name="Kato T."/>
            <person name="Kawaji H."/>
            <person name="Kawagashira N."/>
            <person name="Kawashima T."/>
            <person name="Kojima M."/>
            <person name="Kondo S."/>
            <person name="Konno H."/>
            <person name="Nakano K."/>
            <person name="Ninomiya N."/>
            <person name="Nishio T."/>
            <person name="Okada M."/>
            <person name="Plessy C."/>
            <person name="Shibata K."/>
            <person name="Shiraki T."/>
            <person name="Suzuki S."/>
            <person name="Tagami M."/>
            <person name="Waki K."/>
            <person name="Watahiki A."/>
            <person name="Okamura-Oho Y."/>
            <person name="Suzuki H."/>
            <person name="Kawai J."/>
            <person name="Hayashizaki Y."/>
        </authorList>
    </citation>
    <scope>NUCLEOTIDE SEQUENCE [LARGE SCALE MRNA]</scope>
    <source>
        <strain>C57BL/6J</strain>
        <tissue>Liver</tissue>
    </source>
</reference>
<reference key="2">
    <citation type="journal article" date="2009" name="PLoS Biol.">
        <title>Lineage-specific biology revealed by a finished genome assembly of the mouse.</title>
        <authorList>
            <person name="Church D.M."/>
            <person name="Goodstadt L."/>
            <person name="Hillier L.W."/>
            <person name="Zody M.C."/>
            <person name="Goldstein S."/>
            <person name="She X."/>
            <person name="Bult C.J."/>
            <person name="Agarwala R."/>
            <person name="Cherry J.L."/>
            <person name="DiCuccio M."/>
            <person name="Hlavina W."/>
            <person name="Kapustin Y."/>
            <person name="Meric P."/>
            <person name="Maglott D."/>
            <person name="Birtle Z."/>
            <person name="Marques A.C."/>
            <person name="Graves T."/>
            <person name="Zhou S."/>
            <person name="Teague B."/>
            <person name="Potamousis K."/>
            <person name="Churas C."/>
            <person name="Place M."/>
            <person name="Herschleb J."/>
            <person name="Runnheim R."/>
            <person name="Forrest D."/>
            <person name="Amos-Landgraf J."/>
            <person name="Schwartz D.C."/>
            <person name="Cheng Z."/>
            <person name="Lindblad-Toh K."/>
            <person name="Eichler E.E."/>
            <person name="Ponting C.P."/>
        </authorList>
    </citation>
    <scope>NUCLEOTIDE SEQUENCE [LARGE SCALE GENOMIC DNA]</scope>
    <source>
        <strain>C57BL/6J</strain>
    </source>
</reference>
<reference key="3">
    <citation type="journal article" date="2004" name="Genome Res.">
        <title>The status, quality, and expansion of the NIH full-length cDNA project: the Mammalian Gene Collection (MGC).</title>
        <authorList>
            <consortium name="The MGC Project Team"/>
        </authorList>
    </citation>
    <scope>NUCLEOTIDE SEQUENCE [LARGE SCALE MRNA] OF 2-488</scope>
    <source>
        <strain>C57BL/6J</strain>
        <tissue>Brain</tissue>
    </source>
</reference>
<reference key="4">
    <citation type="journal article" date="2005" name="Curr. Biol.">
        <title>MOS2, a protein containing G-patch and KOW motifs, is essential for innate immunity in Arabidopsis thaliana.</title>
        <authorList>
            <person name="Zhang Y."/>
            <person name="Cheng Y.T."/>
            <person name="Bi D."/>
            <person name="Palma K."/>
            <person name="Li X."/>
        </authorList>
    </citation>
    <scope>IDENTIFICATION</scope>
</reference>
<reference key="5">
    <citation type="journal article" date="2010" name="Cell">
        <title>A tissue-specific atlas of mouse protein phosphorylation and expression.</title>
        <authorList>
            <person name="Huttlin E.L."/>
            <person name="Jedrychowski M.P."/>
            <person name="Elias J.E."/>
            <person name="Goswami T."/>
            <person name="Rad R."/>
            <person name="Beausoleil S.A."/>
            <person name="Villen J."/>
            <person name="Haas W."/>
            <person name="Sowa M.E."/>
            <person name="Gygi S.P."/>
        </authorList>
    </citation>
    <scope>PHOSPHORYLATION [LARGE SCALE ANALYSIS] AT SER-485</scope>
    <scope>IDENTIFICATION BY MASS SPECTROMETRY [LARGE SCALE ANALYSIS]</scope>
    <source>
        <tissue>Kidney</tissue>
        <tissue>Liver</tissue>
    </source>
</reference>
<protein>
    <recommendedName>
        <fullName>G-patch domain and KOW motifs-containing protein</fullName>
    </recommendedName>
    <alternativeName>
        <fullName>Protein MOS2 homolog</fullName>
    </alternativeName>
</protein>
<sequence>MAGRESPPPSAPSMAPISFGFTRTSVRRRLADLGDSERQAPEEKDFLATVEGRKLQSVNPPEAPKELVIPLIQNGSRRQPLSKNPKPSSETSTVLMSDGVLSQAVKELIEESKKSLEERENAGVDPTLTIPMIQKGCTPIEEGSDSEPQAETVPEEADYEAVPVEAYGLAMLRGMGWKPGKGIGNTFSQVVKPRVNSIRPKGLGLGANRMEAQDLASVGSHHPPRPDGDRENDKEGQPQGLMHGRAVVVLSGPYRGLYGKVEGLDPDNVRAMVRLAVGNRIVTVSEYCLRPVSQQEFDSHTSKPGHVSQTSTEQQNRATGTASSLKAAQNQEDSKRRQKGSEKKRKHSPDRQDGPVPKTEKAAPRNKHWLHRDLRVRFIDKLHKSGRYYNTKMTIEDVLSPDTCVCRTDEGRVLEDVREDMLETLIPKGEGHRVMVVLGPHAGKVGLLRSRDRAQSHALVQLRRENQVVELHYNAICQYMGPGDSDED</sequence>
<name>GPKOW_MOUSE</name>